<feature type="chain" id="PRO_0000405840" description="N-lysine methyltransferase SETD6">
    <location>
        <begin position="1"/>
        <end position="450"/>
    </location>
</feature>
<feature type="domain" description="SET" evidence="3">
    <location>
        <begin position="39"/>
        <end position="263"/>
    </location>
</feature>
<feature type="region of interest" description="Disordered" evidence="4">
    <location>
        <begin position="1"/>
        <end position="20"/>
    </location>
</feature>
<feature type="compositionally biased region" description="Basic residues" evidence="4">
    <location>
        <begin position="1"/>
        <end position="10"/>
    </location>
</feature>
<feature type="binding site" evidence="1">
    <location>
        <begin position="50"/>
        <end position="52"/>
    </location>
    <ligand>
        <name>S-adenosyl-L-methionine</name>
        <dbReference type="ChEBI" id="CHEBI:59789"/>
    </ligand>
</feature>
<feature type="binding site" evidence="1">
    <location>
        <position position="99"/>
    </location>
    <ligand>
        <name>substrate</name>
    </ligand>
</feature>
<feature type="binding site" evidence="1">
    <location>
        <position position="200"/>
    </location>
    <ligand>
        <name>S-adenosyl-L-methionine</name>
        <dbReference type="ChEBI" id="CHEBI:59789"/>
    </ligand>
</feature>
<feature type="binding site" evidence="1">
    <location>
        <position position="201"/>
    </location>
    <ligand>
        <name>substrate</name>
    </ligand>
</feature>
<feature type="binding site" evidence="1">
    <location>
        <position position="203"/>
    </location>
    <ligand>
        <name>substrate</name>
    </ligand>
</feature>
<feature type="binding site" evidence="1">
    <location>
        <begin position="228"/>
        <end position="229"/>
    </location>
    <ligand>
        <name>S-adenosyl-L-methionine</name>
        <dbReference type="ChEBI" id="CHEBI:59789"/>
    </ligand>
</feature>
<feature type="binding site" evidence="1">
    <location>
        <position position="274"/>
    </location>
    <ligand>
        <name>S-adenosyl-L-methionine</name>
        <dbReference type="ChEBI" id="CHEBI:59789"/>
    </ligand>
</feature>
<feature type="modified residue" description="N6-methylated lysine; by autocatalysis" evidence="1">
    <location>
        <position position="40"/>
    </location>
</feature>
<feature type="modified residue" description="N6-methylated lysine; by autocatalysis" evidence="1">
    <location>
        <position position="156"/>
    </location>
</feature>
<feature type="modified residue" description="N6-methylated lysine; by autocatalysis" evidence="1">
    <location>
        <position position="349"/>
    </location>
</feature>
<feature type="splice variant" id="VSP_040723" description="In isoform 2." evidence="5">
    <location>
        <begin position="135"/>
        <end position="179"/>
    </location>
</feature>
<feature type="sequence conflict" description="In Ref. 2; AAI40546." evidence="6" ref="2">
    <original>S</original>
    <variation>C</variation>
    <location>
        <position position="181"/>
    </location>
</feature>
<sequence>MATQAKRRRVAGPAGSDDDPAPVASFLSWCQRVGLELSPKVAVSRQGTVAGYGMVARESVQPGELLFAVPRAALLSQHTCSISGVLERERGALQSQSGWVPLLLALLHEMQAPASPWSPYFALWPELGRLQHPMFWPEEERRRLLQGTGVPEAVEKDLVNIRSEYYSIVLPFMDAHPDLFSPRVRSLELYRQLVALVMAYSFQEPLEEEEDEKEPNSPLMVPAADILNHLANHNANLEYSPTCLRMVAIQPIPKGHEIFNTYGQMANWQLIHMYGFAEPYPDNTNDTADIQMVTVREAALQGTKVEAERLLLYERWDFLCKLEMVGEEGAFVIGREEVLTEEELATTLKVLCMPAEEFRAFKDQNGWEDDKSEEDSLTITDIPKLKASWRQLLRDSVLLTLQTYATDLKTEQDLLSNKEVYAALSWREQQALQVRYGQKMILHRLLELTR</sequence>
<accession>E1BI64</accession>
<accession>A5D7G4</accession>
<keyword id="KW-0025">Alternative splicing</keyword>
<keyword id="KW-0488">Methylation</keyword>
<keyword id="KW-0489">Methyltransferase</keyword>
<keyword id="KW-0539">Nucleus</keyword>
<keyword id="KW-1185">Reference proteome</keyword>
<keyword id="KW-0949">S-adenosyl-L-methionine</keyword>
<keyword id="KW-0808">Transferase</keyword>
<comment type="function">
    <text evidence="1 2">Protein-lysine N-methyltransferase. Monomethylates 'Lys-310' of the RELA subunit of NF-kappa-B complex, leading to down-regulation of NF-kappa-B transcription factor activity. Monomethylates 'Lys-8' of H2AZ (H2AZK8me1) (By similarity). Required for the maintenance of embryonic stem cell self-renewal (By similarity). Methylates PAK4.</text>
</comment>
<comment type="catalytic activity">
    <reaction evidence="1">
        <text>L-lysyl-[protein] + S-adenosyl-L-methionine = N(6)-methyl-L-lysyl-[protein] + S-adenosyl-L-homocysteine + H(+)</text>
        <dbReference type="Rhea" id="RHEA:51736"/>
        <dbReference type="Rhea" id="RHEA-COMP:9752"/>
        <dbReference type="Rhea" id="RHEA-COMP:13053"/>
        <dbReference type="ChEBI" id="CHEBI:15378"/>
        <dbReference type="ChEBI" id="CHEBI:29969"/>
        <dbReference type="ChEBI" id="CHEBI:57856"/>
        <dbReference type="ChEBI" id="CHEBI:59789"/>
        <dbReference type="ChEBI" id="CHEBI:61929"/>
    </reaction>
    <physiologicalReaction direction="left-to-right" evidence="1">
        <dbReference type="Rhea" id="RHEA:51737"/>
    </physiologicalReaction>
</comment>
<comment type="catalytic activity">
    <reaction evidence="1">
        <text>L-lysyl(8)-[histone H2AZ] + S-adenosyl-L-methionine = N(6)-methyl-L-lysyl(8)-[histone H2AZ] + S-adenosyl-L-homocysteine + H(+)</text>
        <dbReference type="Rhea" id="RHEA:67808"/>
        <dbReference type="Rhea" id="RHEA-COMP:17357"/>
        <dbReference type="Rhea" id="RHEA-COMP:17358"/>
        <dbReference type="ChEBI" id="CHEBI:15378"/>
        <dbReference type="ChEBI" id="CHEBI:29969"/>
        <dbReference type="ChEBI" id="CHEBI:57856"/>
        <dbReference type="ChEBI" id="CHEBI:59789"/>
        <dbReference type="ChEBI" id="CHEBI:61929"/>
    </reaction>
    <physiologicalReaction direction="left-to-right" evidence="1">
        <dbReference type="Rhea" id="RHEA:67809"/>
    </physiologicalReaction>
</comment>
<comment type="subunit">
    <text evidence="1">Monomer, homodimer and homotrimer; these structures are stabilized in the presence of S-adenosyl-L-methionine (SAM).</text>
</comment>
<comment type="subcellular location">
    <subcellularLocation>
        <location evidence="1">Nucleus</location>
    </subcellularLocation>
</comment>
<comment type="alternative products">
    <event type="alternative splicing"/>
    <isoform>
        <id>E1BI64-1</id>
        <name>1</name>
        <sequence type="displayed"/>
    </isoform>
    <isoform>
        <id>E1BI64-2</id>
        <name>2</name>
        <sequence type="described" ref="VSP_040723"/>
    </isoform>
</comment>
<comment type="PTM">
    <text evidence="1">Automethylated.</text>
</comment>
<comment type="similarity">
    <text evidence="3">Belongs to the class V-like SAM-binding methyltransferase superfamily. Histone-lysine methyltransferase family. SETD6 subfamily.</text>
</comment>
<gene>
    <name type="primary">SETD6</name>
</gene>
<proteinExistence type="evidence at transcript level"/>
<name>SETD6_BOVIN</name>
<organism>
    <name type="scientific">Bos taurus</name>
    <name type="common">Bovine</name>
    <dbReference type="NCBI Taxonomy" id="9913"/>
    <lineage>
        <taxon>Eukaryota</taxon>
        <taxon>Metazoa</taxon>
        <taxon>Chordata</taxon>
        <taxon>Craniata</taxon>
        <taxon>Vertebrata</taxon>
        <taxon>Euteleostomi</taxon>
        <taxon>Mammalia</taxon>
        <taxon>Eutheria</taxon>
        <taxon>Laurasiatheria</taxon>
        <taxon>Artiodactyla</taxon>
        <taxon>Ruminantia</taxon>
        <taxon>Pecora</taxon>
        <taxon>Bovidae</taxon>
        <taxon>Bovinae</taxon>
        <taxon>Bos</taxon>
    </lineage>
</organism>
<reference key="1">
    <citation type="journal article" date="2009" name="Science">
        <title>The genome sequence of taurine cattle: a window to ruminant biology and evolution.</title>
        <authorList>
            <consortium name="The bovine genome sequencing and analysis consortium"/>
        </authorList>
    </citation>
    <scope>NUCLEOTIDE SEQUENCE [LARGE SCALE GENOMIC DNA]</scope>
</reference>
<reference key="2">
    <citation type="submission" date="2007-04" db="EMBL/GenBank/DDBJ databases">
        <authorList>
            <consortium name="NIH - Mammalian Gene Collection (MGC) project"/>
        </authorList>
    </citation>
    <scope>NUCLEOTIDE SEQUENCE [LARGE SCALE MRNA] (ISOFORM 2)</scope>
    <source>
        <strain>Hereford</strain>
        <tissue>Heart ventricle</tissue>
    </source>
</reference>
<evidence type="ECO:0000250" key="1">
    <source>
        <dbReference type="UniProtKB" id="Q8TBK2"/>
    </source>
</evidence>
<evidence type="ECO:0000250" key="2">
    <source>
        <dbReference type="UniProtKB" id="Q9CWY3"/>
    </source>
</evidence>
<evidence type="ECO:0000255" key="3">
    <source>
        <dbReference type="PROSITE-ProRule" id="PRU00190"/>
    </source>
</evidence>
<evidence type="ECO:0000256" key="4">
    <source>
        <dbReference type="SAM" id="MobiDB-lite"/>
    </source>
</evidence>
<evidence type="ECO:0000303" key="5">
    <source ref="2"/>
</evidence>
<evidence type="ECO:0000305" key="6"/>
<dbReference type="EC" id="2.1.1.-" evidence="1"/>
<dbReference type="EMBL" id="AAFC03050240">
    <property type="status" value="NOT_ANNOTATED_CDS"/>
    <property type="molecule type" value="Genomic_DNA"/>
</dbReference>
<dbReference type="EMBL" id="BC140545">
    <property type="protein sequence ID" value="AAI40546.1"/>
    <property type="molecule type" value="mRNA"/>
</dbReference>
<dbReference type="RefSeq" id="NP_001091571.1">
    <property type="nucleotide sequence ID" value="NM_001098102.1"/>
</dbReference>
<dbReference type="RefSeq" id="XP_005218752.1">
    <molecule id="E1BI64-1"/>
    <property type="nucleotide sequence ID" value="XM_005218695.4"/>
</dbReference>
<dbReference type="SMR" id="E1BI64"/>
<dbReference type="FunCoup" id="E1BI64">
    <property type="interactions" value="1411"/>
</dbReference>
<dbReference type="STRING" id="9913.ENSBTAP00000069257"/>
<dbReference type="PaxDb" id="9913-ENSBTAP00000027690"/>
<dbReference type="Ensembl" id="ENSBTAT00000027690.6">
    <molecule id="E1BI64-1"/>
    <property type="protein sequence ID" value="ENSBTAP00000027690.6"/>
    <property type="gene ID" value="ENSBTAG00000020781.6"/>
</dbReference>
<dbReference type="GeneID" id="539651"/>
<dbReference type="KEGG" id="bta:539651"/>
<dbReference type="CTD" id="79918"/>
<dbReference type="eggNOG" id="KOG1338">
    <property type="taxonomic scope" value="Eukaryota"/>
</dbReference>
<dbReference type="GeneTree" id="ENSGT00940000153577"/>
<dbReference type="HOGENOM" id="CLU_017135_2_0_1"/>
<dbReference type="InParanoid" id="E1BI64"/>
<dbReference type="OrthoDB" id="341421at2759"/>
<dbReference type="TreeFam" id="TF106399"/>
<dbReference type="Proteomes" id="UP000009136">
    <property type="component" value="Chromosome 18"/>
</dbReference>
<dbReference type="GO" id="GO:0005634">
    <property type="term" value="C:nucleus"/>
    <property type="evidence" value="ECO:0000250"/>
    <property type="project" value="UniProtKB"/>
</dbReference>
<dbReference type="GO" id="GO:0016279">
    <property type="term" value="F:protein-lysine N-methyltransferase activity"/>
    <property type="evidence" value="ECO:0000250"/>
    <property type="project" value="UniProtKB"/>
</dbReference>
<dbReference type="GO" id="GO:1904047">
    <property type="term" value="F:S-adenosyl-L-methionine binding"/>
    <property type="evidence" value="ECO:0000250"/>
    <property type="project" value="UniProtKB"/>
</dbReference>
<dbReference type="GO" id="GO:0032088">
    <property type="term" value="P:negative regulation of NF-kappaB transcription factor activity"/>
    <property type="evidence" value="ECO:0000250"/>
    <property type="project" value="UniProtKB"/>
</dbReference>
<dbReference type="GO" id="GO:0018026">
    <property type="term" value="P:peptidyl-lysine monomethylation"/>
    <property type="evidence" value="ECO:0000250"/>
    <property type="project" value="UniProtKB"/>
</dbReference>
<dbReference type="GO" id="GO:0050727">
    <property type="term" value="P:regulation of inflammatory response"/>
    <property type="evidence" value="ECO:0000250"/>
    <property type="project" value="UniProtKB"/>
</dbReference>
<dbReference type="GO" id="GO:0048863">
    <property type="term" value="P:stem cell differentiation"/>
    <property type="evidence" value="ECO:0000250"/>
    <property type="project" value="UniProtKB"/>
</dbReference>
<dbReference type="GO" id="GO:0019827">
    <property type="term" value="P:stem cell population maintenance"/>
    <property type="evidence" value="ECO:0000250"/>
    <property type="project" value="UniProtKB"/>
</dbReference>
<dbReference type="CDD" id="cd19178">
    <property type="entry name" value="SET_SETD6"/>
    <property type="match status" value="1"/>
</dbReference>
<dbReference type="FunFam" id="3.90.1410.10:FF:000004">
    <property type="entry name" value="N-lysine methyltransferase SETD6"/>
    <property type="match status" value="1"/>
</dbReference>
<dbReference type="FunFam" id="3.90.1420.10:FF:000002">
    <property type="entry name" value="N-lysine methyltransferase SETD6"/>
    <property type="match status" value="1"/>
</dbReference>
<dbReference type="Gene3D" id="3.90.1420.10">
    <property type="entry name" value="Rubisco LSMT, substrate-binding domain"/>
    <property type="match status" value="1"/>
</dbReference>
<dbReference type="Gene3D" id="3.90.1410.10">
    <property type="entry name" value="set domain protein methyltransferase, domain 1"/>
    <property type="match status" value="1"/>
</dbReference>
<dbReference type="InterPro" id="IPR011383">
    <property type="entry name" value="N-lys_methylase_SETD6"/>
</dbReference>
<dbReference type="InterPro" id="IPR015353">
    <property type="entry name" value="Rubisco_LSMT_subst-bd"/>
</dbReference>
<dbReference type="InterPro" id="IPR036464">
    <property type="entry name" value="Rubisco_LSMT_subst-bd_sf"/>
</dbReference>
<dbReference type="InterPro" id="IPR001214">
    <property type="entry name" value="SET_dom"/>
</dbReference>
<dbReference type="InterPro" id="IPR046341">
    <property type="entry name" value="SET_dom_sf"/>
</dbReference>
<dbReference type="InterPro" id="IPR050600">
    <property type="entry name" value="SETD3_SETD6_MTase"/>
</dbReference>
<dbReference type="InterPro" id="IPR044430">
    <property type="entry name" value="SETD6_SET"/>
</dbReference>
<dbReference type="PANTHER" id="PTHR13271:SF34">
    <property type="entry name" value="N-LYSINE METHYLTRANSFERASE SETD6"/>
    <property type="match status" value="1"/>
</dbReference>
<dbReference type="PANTHER" id="PTHR13271">
    <property type="entry name" value="UNCHARACTERIZED PUTATIVE METHYLTRANSFERASE"/>
    <property type="match status" value="1"/>
</dbReference>
<dbReference type="Pfam" id="PF09273">
    <property type="entry name" value="Rubis-subs-bind"/>
    <property type="match status" value="1"/>
</dbReference>
<dbReference type="Pfam" id="PF00856">
    <property type="entry name" value="SET"/>
    <property type="match status" value="1"/>
</dbReference>
<dbReference type="PIRSF" id="PIRSF011771">
    <property type="entry name" value="RMS1_SET"/>
    <property type="match status" value="1"/>
</dbReference>
<dbReference type="SUPFAM" id="SSF81822">
    <property type="entry name" value="RuBisCo LSMT C-terminal, substrate-binding domain"/>
    <property type="match status" value="1"/>
</dbReference>
<dbReference type="SUPFAM" id="SSF82199">
    <property type="entry name" value="SET domain"/>
    <property type="match status" value="1"/>
</dbReference>
<dbReference type="PROSITE" id="PS50280">
    <property type="entry name" value="SET"/>
    <property type="match status" value="1"/>
</dbReference>
<protein>
    <recommendedName>
        <fullName>N-lysine methyltransferase SETD6</fullName>
        <ecNumber evidence="1">2.1.1.-</ecNumber>
    </recommendedName>
    <alternativeName>
        <fullName>SET domain-containing protein 6</fullName>
    </alternativeName>
</protein>